<organism>
    <name type="scientific">Shewanella sediminis (strain HAW-EB3)</name>
    <dbReference type="NCBI Taxonomy" id="425104"/>
    <lineage>
        <taxon>Bacteria</taxon>
        <taxon>Pseudomonadati</taxon>
        <taxon>Pseudomonadota</taxon>
        <taxon>Gammaproteobacteria</taxon>
        <taxon>Alteromonadales</taxon>
        <taxon>Shewanellaceae</taxon>
        <taxon>Shewanella</taxon>
    </lineage>
</organism>
<reference key="1">
    <citation type="submission" date="2007-08" db="EMBL/GenBank/DDBJ databases">
        <title>Complete sequence of Shewanella sediminis HAW-EB3.</title>
        <authorList>
            <consortium name="US DOE Joint Genome Institute"/>
            <person name="Copeland A."/>
            <person name="Lucas S."/>
            <person name="Lapidus A."/>
            <person name="Barry K."/>
            <person name="Glavina del Rio T."/>
            <person name="Dalin E."/>
            <person name="Tice H."/>
            <person name="Pitluck S."/>
            <person name="Chertkov O."/>
            <person name="Brettin T."/>
            <person name="Bruce D."/>
            <person name="Detter J.C."/>
            <person name="Han C."/>
            <person name="Schmutz J."/>
            <person name="Larimer F."/>
            <person name="Land M."/>
            <person name="Hauser L."/>
            <person name="Kyrpides N."/>
            <person name="Kim E."/>
            <person name="Zhao J.-S."/>
            <person name="Richardson P."/>
        </authorList>
    </citation>
    <scope>NUCLEOTIDE SEQUENCE [LARGE SCALE GENOMIC DNA]</scope>
    <source>
        <strain>HAW-EB3</strain>
    </source>
</reference>
<name>GLMU_SHESH</name>
<gene>
    <name evidence="1" type="primary">glmU</name>
    <name type="ordered locus">Ssed_4484</name>
</gene>
<accession>A8G1W3</accession>
<sequence length="455" mass="48044">MALNVVILAAGKGTRMRSELPKVLHPIAHKSMVQHVIDTAHSVGSDAIQLVYGYGAEKLQSVLGEQQLNWVLQAEQLGTGHAVAQANDNIGDDDTVLILYGDVPLIQASTLEALLAAREDNGLAILTVNLANPMGYGRIVREANKVVGIVEQKDASAEQLAINEINTGIMAAPGKQLKAWLGQLSSDNAQGEYYLTDIVAMAHKDGVEITTAQPESAIEVEGANNRVQLAQLERAYQARAAEKLMLEGANLRDPARLDIRGDVTVGMDVMIDINVIIQGKVTIGNNVTIGAGAILIDCEIGDNAEIKPYSIVENAKLGVEASAGPFARLRPGAELKRDAHIGNFVEMKKAVLGEGSKAGHLAYIGDAQIGCGVNIGAGTITCNYDGANKHLTVIEDNVFVGSDTQLVAPVTIGKGATLGAGSTITSNVAEGELVITRVKQRHLTGWARPVKKPKS</sequence>
<keyword id="KW-0012">Acyltransferase</keyword>
<keyword id="KW-0133">Cell shape</keyword>
<keyword id="KW-0961">Cell wall biogenesis/degradation</keyword>
<keyword id="KW-0963">Cytoplasm</keyword>
<keyword id="KW-0460">Magnesium</keyword>
<keyword id="KW-0479">Metal-binding</keyword>
<keyword id="KW-0511">Multifunctional enzyme</keyword>
<keyword id="KW-0548">Nucleotidyltransferase</keyword>
<keyword id="KW-0573">Peptidoglycan synthesis</keyword>
<keyword id="KW-1185">Reference proteome</keyword>
<keyword id="KW-0677">Repeat</keyword>
<keyword id="KW-0808">Transferase</keyword>
<comment type="function">
    <text evidence="1">Catalyzes the last two sequential reactions in the de novo biosynthetic pathway for UDP-N-acetylglucosamine (UDP-GlcNAc). The C-terminal domain catalyzes the transfer of acetyl group from acetyl coenzyme A to glucosamine-1-phosphate (GlcN-1-P) to produce N-acetylglucosamine-1-phosphate (GlcNAc-1-P), which is converted into UDP-GlcNAc by the transfer of uridine 5-monophosphate (from uridine 5-triphosphate), a reaction catalyzed by the N-terminal domain.</text>
</comment>
<comment type="catalytic activity">
    <reaction evidence="1">
        <text>alpha-D-glucosamine 1-phosphate + acetyl-CoA = N-acetyl-alpha-D-glucosamine 1-phosphate + CoA + H(+)</text>
        <dbReference type="Rhea" id="RHEA:13725"/>
        <dbReference type="ChEBI" id="CHEBI:15378"/>
        <dbReference type="ChEBI" id="CHEBI:57287"/>
        <dbReference type="ChEBI" id="CHEBI:57288"/>
        <dbReference type="ChEBI" id="CHEBI:57776"/>
        <dbReference type="ChEBI" id="CHEBI:58516"/>
        <dbReference type="EC" id="2.3.1.157"/>
    </reaction>
</comment>
<comment type="catalytic activity">
    <reaction evidence="1">
        <text>N-acetyl-alpha-D-glucosamine 1-phosphate + UTP + H(+) = UDP-N-acetyl-alpha-D-glucosamine + diphosphate</text>
        <dbReference type="Rhea" id="RHEA:13509"/>
        <dbReference type="ChEBI" id="CHEBI:15378"/>
        <dbReference type="ChEBI" id="CHEBI:33019"/>
        <dbReference type="ChEBI" id="CHEBI:46398"/>
        <dbReference type="ChEBI" id="CHEBI:57705"/>
        <dbReference type="ChEBI" id="CHEBI:57776"/>
        <dbReference type="EC" id="2.7.7.23"/>
    </reaction>
</comment>
<comment type="cofactor">
    <cofactor evidence="1">
        <name>Mg(2+)</name>
        <dbReference type="ChEBI" id="CHEBI:18420"/>
    </cofactor>
    <text evidence="1">Binds 1 Mg(2+) ion per subunit.</text>
</comment>
<comment type="pathway">
    <text evidence="1">Nucleotide-sugar biosynthesis; UDP-N-acetyl-alpha-D-glucosamine biosynthesis; N-acetyl-alpha-D-glucosamine 1-phosphate from alpha-D-glucosamine 6-phosphate (route II): step 2/2.</text>
</comment>
<comment type="pathway">
    <text evidence="1">Nucleotide-sugar biosynthesis; UDP-N-acetyl-alpha-D-glucosamine biosynthesis; UDP-N-acetyl-alpha-D-glucosamine from N-acetyl-alpha-D-glucosamine 1-phosphate: step 1/1.</text>
</comment>
<comment type="pathway">
    <text evidence="1">Bacterial outer membrane biogenesis; LPS lipid A biosynthesis.</text>
</comment>
<comment type="subunit">
    <text evidence="1">Homotrimer.</text>
</comment>
<comment type="subcellular location">
    <subcellularLocation>
        <location evidence="1">Cytoplasm</location>
    </subcellularLocation>
</comment>
<comment type="similarity">
    <text evidence="1">In the N-terminal section; belongs to the N-acetylglucosamine-1-phosphate uridyltransferase family.</text>
</comment>
<comment type="similarity">
    <text evidence="1">In the C-terminal section; belongs to the transferase hexapeptide repeat family.</text>
</comment>
<dbReference type="EC" id="2.7.7.23" evidence="1"/>
<dbReference type="EC" id="2.3.1.157" evidence="1"/>
<dbReference type="EMBL" id="CP000821">
    <property type="protein sequence ID" value="ABV39086.1"/>
    <property type="molecule type" value="Genomic_DNA"/>
</dbReference>
<dbReference type="RefSeq" id="WP_012144813.1">
    <property type="nucleotide sequence ID" value="NC_009831.1"/>
</dbReference>
<dbReference type="SMR" id="A8G1W3"/>
<dbReference type="STRING" id="425104.Ssed_4484"/>
<dbReference type="KEGG" id="sse:Ssed_4484"/>
<dbReference type="eggNOG" id="COG1207">
    <property type="taxonomic scope" value="Bacteria"/>
</dbReference>
<dbReference type="HOGENOM" id="CLU_029499_15_2_6"/>
<dbReference type="OrthoDB" id="9775031at2"/>
<dbReference type="UniPathway" id="UPA00113">
    <property type="reaction ID" value="UER00532"/>
</dbReference>
<dbReference type="UniPathway" id="UPA00113">
    <property type="reaction ID" value="UER00533"/>
</dbReference>
<dbReference type="UniPathway" id="UPA00973"/>
<dbReference type="Proteomes" id="UP000002015">
    <property type="component" value="Chromosome"/>
</dbReference>
<dbReference type="GO" id="GO:0005737">
    <property type="term" value="C:cytoplasm"/>
    <property type="evidence" value="ECO:0007669"/>
    <property type="project" value="UniProtKB-SubCell"/>
</dbReference>
<dbReference type="GO" id="GO:0016020">
    <property type="term" value="C:membrane"/>
    <property type="evidence" value="ECO:0007669"/>
    <property type="project" value="GOC"/>
</dbReference>
<dbReference type="GO" id="GO:0019134">
    <property type="term" value="F:glucosamine-1-phosphate N-acetyltransferase activity"/>
    <property type="evidence" value="ECO:0007669"/>
    <property type="project" value="UniProtKB-UniRule"/>
</dbReference>
<dbReference type="GO" id="GO:0000287">
    <property type="term" value="F:magnesium ion binding"/>
    <property type="evidence" value="ECO:0007669"/>
    <property type="project" value="UniProtKB-UniRule"/>
</dbReference>
<dbReference type="GO" id="GO:0003977">
    <property type="term" value="F:UDP-N-acetylglucosamine diphosphorylase activity"/>
    <property type="evidence" value="ECO:0007669"/>
    <property type="project" value="UniProtKB-UniRule"/>
</dbReference>
<dbReference type="GO" id="GO:0000902">
    <property type="term" value="P:cell morphogenesis"/>
    <property type="evidence" value="ECO:0007669"/>
    <property type="project" value="UniProtKB-UniRule"/>
</dbReference>
<dbReference type="GO" id="GO:0071555">
    <property type="term" value="P:cell wall organization"/>
    <property type="evidence" value="ECO:0007669"/>
    <property type="project" value="UniProtKB-KW"/>
</dbReference>
<dbReference type="GO" id="GO:0009245">
    <property type="term" value="P:lipid A biosynthetic process"/>
    <property type="evidence" value="ECO:0007669"/>
    <property type="project" value="UniProtKB-UniRule"/>
</dbReference>
<dbReference type="GO" id="GO:0009252">
    <property type="term" value="P:peptidoglycan biosynthetic process"/>
    <property type="evidence" value="ECO:0007669"/>
    <property type="project" value="UniProtKB-UniRule"/>
</dbReference>
<dbReference type="GO" id="GO:0008360">
    <property type="term" value="P:regulation of cell shape"/>
    <property type="evidence" value="ECO:0007669"/>
    <property type="project" value="UniProtKB-KW"/>
</dbReference>
<dbReference type="GO" id="GO:0006048">
    <property type="term" value="P:UDP-N-acetylglucosamine biosynthetic process"/>
    <property type="evidence" value="ECO:0007669"/>
    <property type="project" value="UniProtKB-UniPathway"/>
</dbReference>
<dbReference type="CDD" id="cd02540">
    <property type="entry name" value="GT2_GlmU_N_bac"/>
    <property type="match status" value="1"/>
</dbReference>
<dbReference type="CDD" id="cd03353">
    <property type="entry name" value="LbH_GlmU_C"/>
    <property type="match status" value="1"/>
</dbReference>
<dbReference type="Gene3D" id="2.160.10.10">
    <property type="entry name" value="Hexapeptide repeat proteins"/>
    <property type="match status" value="1"/>
</dbReference>
<dbReference type="Gene3D" id="3.90.550.10">
    <property type="entry name" value="Spore Coat Polysaccharide Biosynthesis Protein SpsA, Chain A"/>
    <property type="match status" value="1"/>
</dbReference>
<dbReference type="HAMAP" id="MF_01631">
    <property type="entry name" value="GlmU"/>
    <property type="match status" value="1"/>
</dbReference>
<dbReference type="InterPro" id="IPR005882">
    <property type="entry name" value="Bifunctional_GlmU"/>
</dbReference>
<dbReference type="InterPro" id="IPR050065">
    <property type="entry name" value="GlmU-like"/>
</dbReference>
<dbReference type="InterPro" id="IPR038009">
    <property type="entry name" value="GlmU_C_LbH"/>
</dbReference>
<dbReference type="InterPro" id="IPR001451">
    <property type="entry name" value="Hexapep"/>
</dbReference>
<dbReference type="InterPro" id="IPR018357">
    <property type="entry name" value="Hexapep_transf_CS"/>
</dbReference>
<dbReference type="InterPro" id="IPR025877">
    <property type="entry name" value="MobA-like_NTP_Trfase"/>
</dbReference>
<dbReference type="InterPro" id="IPR029044">
    <property type="entry name" value="Nucleotide-diphossugar_trans"/>
</dbReference>
<dbReference type="InterPro" id="IPR011004">
    <property type="entry name" value="Trimer_LpxA-like_sf"/>
</dbReference>
<dbReference type="NCBIfam" id="TIGR01173">
    <property type="entry name" value="glmU"/>
    <property type="match status" value="1"/>
</dbReference>
<dbReference type="NCBIfam" id="NF006986">
    <property type="entry name" value="PRK09451.1"/>
    <property type="match status" value="1"/>
</dbReference>
<dbReference type="PANTHER" id="PTHR43584:SF3">
    <property type="entry name" value="BIFUNCTIONAL PROTEIN GLMU"/>
    <property type="match status" value="1"/>
</dbReference>
<dbReference type="PANTHER" id="PTHR43584">
    <property type="entry name" value="NUCLEOTIDYL TRANSFERASE"/>
    <property type="match status" value="1"/>
</dbReference>
<dbReference type="Pfam" id="PF00132">
    <property type="entry name" value="Hexapep"/>
    <property type="match status" value="2"/>
</dbReference>
<dbReference type="Pfam" id="PF12804">
    <property type="entry name" value="NTP_transf_3"/>
    <property type="match status" value="1"/>
</dbReference>
<dbReference type="SUPFAM" id="SSF53448">
    <property type="entry name" value="Nucleotide-diphospho-sugar transferases"/>
    <property type="match status" value="1"/>
</dbReference>
<dbReference type="SUPFAM" id="SSF51161">
    <property type="entry name" value="Trimeric LpxA-like enzymes"/>
    <property type="match status" value="1"/>
</dbReference>
<dbReference type="PROSITE" id="PS00101">
    <property type="entry name" value="HEXAPEP_TRANSFERASES"/>
    <property type="match status" value="1"/>
</dbReference>
<feature type="chain" id="PRO_1000088142" description="Bifunctional protein GlmU">
    <location>
        <begin position="1"/>
        <end position="455"/>
    </location>
</feature>
<feature type="region of interest" description="Pyrophosphorylase" evidence="1">
    <location>
        <begin position="1"/>
        <end position="226"/>
    </location>
</feature>
<feature type="region of interest" description="Linker" evidence="1">
    <location>
        <begin position="227"/>
        <end position="247"/>
    </location>
</feature>
<feature type="region of interest" description="N-acetyltransferase" evidence="1">
    <location>
        <begin position="248"/>
        <end position="455"/>
    </location>
</feature>
<feature type="active site" description="Proton acceptor" evidence="1">
    <location>
        <position position="360"/>
    </location>
</feature>
<feature type="binding site" evidence="1">
    <location>
        <begin position="8"/>
        <end position="11"/>
    </location>
    <ligand>
        <name>UDP-N-acetyl-alpha-D-glucosamine</name>
        <dbReference type="ChEBI" id="CHEBI:57705"/>
    </ligand>
</feature>
<feature type="binding site" evidence="1">
    <location>
        <position position="22"/>
    </location>
    <ligand>
        <name>UDP-N-acetyl-alpha-D-glucosamine</name>
        <dbReference type="ChEBI" id="CHEBI:57705"/>
    </ligand>
</feature>
<feature type="binding site" evidence="1">
    <location>
        <position position="73"/>
    </location>
    <ligand>
        <name>UDP-N-acetyl-alpha-D-glucosamine</name>
        <dbReference type="ChEBI" id="CHEBI:57705"/>
    </ligand>
</feature>
<feature type="binding site" evidence="1">
    <location>
        <begin position="78"/>
        <end position="79"/>
    </location>
    <ligand>
        <name>UDP-N-acetyl-alpha-D-glucosamine</name>
        <dbReference type="ChEBI" id="CHEBI:57705"/>
    </ligand>
</feature>
<feature type="binding site" evidence="1">
    <location>
        <begin position="100"/>
        <end position="102"/>
    </location>
    <ligand>
        <name>UDP-N-acetyl-alpha-D-glucosamine</name>
        <dbReference type="ChEBI" id="CHEBI:57705"/>
    </ligand>
</feature>
<feature type="binding site" evidence="1">
    <location>
        <position position="102"/>
    </location>
    <ligand>
        <name>Mg(2+)</name>
        <dbReference type="ChEBI" id="CHEBI:18420"/>
    </ligand>
</feature>
<feature type="binding site" evidence="1">
    <location>
        <position position="137"/>
    </location>
    <ligand>
        <name>UDP-N-acetyl-alpha-D-glucosamine</name>
        <dbReference type="ChEBI" id="CHEBI:57705"/>
    </ligand>
</feature>
<feature type="binding site" evidence="1">
    <location>
        <position position="151"/>
    </location>
    <ligand>
        <name>UDP-N-acetyl-alpha-D-glucosamine</name>
        <dbReference type="ChEBI" id="CHEBI:57705"/>
    </ligand>
</feature>
<feature type="binding site" evidence="1">
    <location>
        <position position="166"/>
    </location>
    <ligand>
        <name>UDP-N-acetyl-alpha-D-glucosamine</name>
        <dbReference type="ChEBI" id="CHEBI:57705"/>
    </ligand>
</feature>
<feature type="binding site" evidence="1">
    <location>
        <position position="224"/>
    </location>
    <ligand>
        <name>Mg(2+)</name>
        <dbReference type="ChEBI" id="CHEBI:18420"/>
    </ligand>
</feature>
<feature type="binding site" evidence="1">
    <location>
        <position position="224"/>
    </location>
    <ligand>
        <name>UDP-N-acetyl-alpha-D-glucosamine</name>
        <dbReference type="ChEBI" id="CHEBI:57705"/>
    </ligand>
</feature>
<feature type="binding site" evidence="1">
    <location>
        <position position="330"/>
    </location>
    <ligand>
        <name>UDP-N-acetyl-alpha-D-glucosamine</name>
        <dbReference type="ChEBI" id="CHEBI:57705"/>
    </ligand>
</feature>
<feature type="binding site" evidence="1">
    <location>
        <position position="348"/>
    </location>
    <ligand>
        <name>UDP-N-acetyl-alpha-D-glucosamine</name>
        <dbReference type="ChEBI" id="CHEBI:57705"/>
    </ligand>
</feature>
<feature type="binding site" evidence="1">
    <location>
        <position position="363"/>
    </location>
    <ligand>
        <name>UDP-N-acetyl-alpha-D-glucosamine</name>
        <dbReference type="ChEBI" id="CHEBI:57705"/>
    </ligand>
</feature>
<feature type="binding site" evidence="1">
    <location>
        <position position="374"/>
    </location>
    <ligand>
        <name>UDP-N-acetyl-alpha-D-glucosamine</name>
        <dbReference type="ChEBI" id="CHEBI:57705"/>
    </ligand>
</feature>
<feature type="binding site" evidence="1">
    <location>
        <position position="377"/>
    </location>
    <ligand>
        <name>acetyl-CoA</name>
        <dbReference type="ChEBI" id="CHEBI:57288"/>
    </ligand>
</feature>
<feature type="binding site" evidence="1">
    <location>
        <begin position="383"/>
        <end position="384"/>
    </location>
    <ligand>
        <name>acetyl-CoA</name>
        <dbReference type="ChEBI" id="CHEBI:57288"/>
    </ligand>
</feature>
<feature type="binding site" evidence="1">
    <location>
        <position position="402"/>
    </location>
    <ligand>
        <name>acetyl-CoA</name>
        <dbReference type="ChEBI" id="CHEBI:57288"/>
    </ligand>
</feature>
<feature type="binding site" evidence="1">
    <location>
        <position position="420"/>
    </location>
    <ligand>
        <name>acetyl-CoA</name>
        <dbReference type="ChEBI" id="CHEBI:57288"/>
    </ligand>
</feature>
<feature type="binding site" evidence="1">
    <location>
        <position position="437"/>
    </location>
    <ligand>
        <name>acetyl-CoA</name>
        <dbReference type="ChEBI" id="CHEBI:57288"/>
    </ligand>
</feature>
<evidence type="ECO:0000255" key="1">
    <source>
        <dbReference type="HAMAP-Rule" id="MF_01631"/>
    </source>
</evidence>
<protein>
    <recommendedName>
        <fullName evidence="1">Bifunctional protein GlmU</fullName>
    </recommendedName>
    <domain>
        <recommendedName>
            <fullName evidence="1">UDP-N-acetylglucosamine pyrophosphorylase</fullName>
            <ecNumber evidence="1">2.7.7.23</ecNumber>
        </recommendedName>
        <alternativeName>
            <fullName evidence="1">N-acetylglucosamine-1-phosphate uridyltransferase</fullName>
        </alternativeName>
    </domain>
    <domain>
        <recommendedName>
            <fullName evidence="1">Glucosamine-1-phosphate N-acetyltransferase</fullName>
            <ecNumber evidence="1">2.3.1.157</ecNumber>
        </recommendedName>
    </domain>
</protein>
<proteinExistence type="inferred from homology"/>